<organism>
    <name type="scientific">Arabidopsis thaliana</name>
    <name type="common">Mouse-ear cress</name>
    <dbReference type="NCBI Taxonomy" id="3702"/>
    <lineage>
        <taxon>Eukaryota</taxon>
        <taxon>Viridiplantae</taxon>
        <taxon>Streptophyta</taxon>
        <taxon>Embryophyta</taxon>
        <taxon>Tracheophyta</taxon>
        <taxon>Spermatophyta</taxon>
        <taxon>Magnoliopsida</taxon>
        <taxon>eudicotyledons</taxon>
        <taxon>Gunneridae</taxon>
        <taxon>Pentapetalae</taxon>
        <taxon>rosids</taxon>
        <taxon>malvids</taxon>
        <taxon>Brassicales</taxon>
        <taxon>Brassicaceae</taxon>
        <taxon>Camelineae</taxon>
        <taxon>Arabidopsis</taxon>
    </lineage>
</organism>
<comment type="function">
    <text evidence="10">Histone demethylase that demethylates 'Lys-4' (H3K4me) of histone H3 with a specific activity for H3K4me3 and H3K4me2. No activity on H3K9me3/2, H3K27me3/2 and H3K36me3/2. Involved in the control of flowering time by demethylating H3K4me3 at the FLC locus and repressing its expression. The repression of FLC level and reduction in H3K4me3 at the FLC locus results in induction of the flowering activator FT, which is a downstream target of FLC.</text>
</comment>
<comment type="catalytic activity">
    <reaction evidence="10">
        <text>N(6),N(6),N(6)-trimethyl-L-lysyl(4)-[histone H3] + 2-oxoglutarate + O2 = N(6),N(6)-dimethyl-L-lysyl(4)-[histone H3] + formaldehyde + succinate + CO2</text>
        <dbReference type="Rhea" id="RHEA:60212"/>
        <dbReference type="Rhea" id="RHEA-COMP:15537"/>
        <dbReference type="Rhea" id="RHEA-COMP:15540"/>
        <dbReference type="ChEBI" id="CHEBI:15379"/>
        <dbReference type="ChEBI" id="CHEBI:16526"/>
        <dbReference type="ChEBI" id="CHEBI:16810"/>
        <dbReference type="ChEBI" id="CHEBI:16842"/>
        <dbReference type="ChEBI" id="CHEBI:30031"/>
        <dbReference type="ChEBI" id="CHEBI:61961"/>
        <dbReference type="ChEBI" id="CHEBI:61976"/>
    </reaction>
    <physiologicalReaction direction="left-to-right" evidence="10">
        <dbReference type="Rhea" id="RHEA:60213"/>
    </physiologicalReaction>
</comment>
<comment type="catalytic activity">
    <reaction evidence="10">
        <text>N(6),N(6)-dimethyl-L-lysyl(4)-[histone H3] + 2-oxoglutarate + O2 = N(6)-methyl-L-lysyl(4)-[histone H3] + formaldehyde + succinate + CO2</text>
        <dbReference type="Rhea" id="RHEA:60216"/>
        <dbReference type="Rhea" id="RHEA-COMP:15540"/>
        <dbReference type="Rhea" id="RHEA-COMP:15543"/>
        <dbReference type="ChEBI" id="CHEBI:15379"/>
        <dbReference type="ChEBI" id="CHEBI:16526"/>
        <dbReference type="ChEBI" id="CHEBI:16810"/>
        <dbReference type="ChEBI" id="CHEBI:16842"/>
        <dbReference type="ChEBI" id="CHEBI:30031"/>
        <dbReference type="ChEBI" id="CHEBI:61929"/>
        <dbReference type="ChEBI" id="CHEBI:61976"/>
    </reaction>
    <physiologicalReaction direction="left-to-right" evidence="10">
        <dbReference type="Rhea" id="RHEA:60217"/>
    </physiologicalReaction>
</comment>
<comment type="cofactor">
    <cofactor evidence="1">
        <name>Fe(2+)</name>
        <dbReference type="ChEBI" id="CHEBI:29033"/>
    </cofactor>
    <text evidence="1">Binds 1 Fe(2+) ion per subunit.</text>
</comment>
<comment type="subcellular location">
    <subcellularLocation>
        <location evidence="3 5 10">Nucleus</location>
    </subcellularLocation>
</comment>
<comment type="tissue specificity">
    <text evidence="9 10">Expressed in vascular tissues of roots, cotyledons, leaves and flowers (PubMed:22536163). Expressed predominantly in phloem companion cells of roots (PubMed:22536163). Present in inflorescences, roots, siliques, leaves and stems (PubMed:18713399).</text>
</comment>
<comment type="disruption phenotype">
    <text evidence="10">Weak late-flowering phenotype.</text>
</comment>
<comment type="miscellaneous">
    <text evidence="13">Plants over-expressing JMJ18 show an early-flowering phenotype.</text>
</comment>
<comment type="similarity">
    <text evidence="12">Belongs to the JARID1 histone demethylase family.</text>
</comment>
<comment type="sequence caution" evidence="12">
    <conflict type="erroneous gene model prediction">
        <sequence resource="EMBL-CDS" id="AAD32935"/>
    </conflict>
</comment>
<name>JMJ18_ARATH</name>
<protein>
    <recommendedName>
        <fullName evidence="11">Lysine-specific demethylase JMJ18</fullName>
        <ecNumber evidence="10">1.14.11.-</ecNumber>
    </recommendedName>
    <alternativeName>
        <fullName evidence="11">Jumonji domain-containing protein 18</fullName>
        <shortName evidence="11">AtJMJ18</shortName>
        <shortName evidence="11">Protein JUMONJI 18</shortName>
    </alternativeName>
    <alternativeName>
        <fullName evidence="11">Lysine-specific histone demethylase JMJ18</fullName>
    </alternativeName>
    <alternativeName>
        <fullName evidence="12">[histone H3]-trimethyl-L-lysine(4) monodemethylase JMJ18</fullName>
    </alternativeName>
</protein>
<accession>F4I6G4</accession>
<accession>Q8W4M0</accession>
<accession>Q9SY24</accession>
<keyword id="KW-0156">Chromatin regulator</keyword>
<keyword id="KW-0223">Dioxygenase</keyword>
<keyword id="KW-0408">Iron</keyword>
<keyword id="KW-0479">Metal-binding</keyword>
<keyword id="KW-0539">Nucleus</keyword>
<keyword id="KW-0560">Oxidoreductase</keyword>
<keyword id="KW-1185">Reference proteome</keyword>
<keyword id="KW-0804">Transcription</keyword>
<keyword id="KW-0805">Transcription regulation</keyword>
<keyword id="KW-0862">Zinc</keyword>
<keyword id="KW-0863">Zinc-finger</keyword>
<sequence length="819" mass="92809">MENPPLESEIKEDMSLKNHPPDKDKDKDTIMEQPSSPRHRKVVARWLPDEAQRPIINDAPVFTPSLEEFVDPLAYIEKIRPLAEPYGICRIIPPSTWKPPCRLKEKSIWEQTKFPTRIQTVDLLQNREPMKKKPKSRKRKRRRNSRMGSSKRRSGSSPAESTSSPEAEEKFGFNSGSDFTLDEFEKYALHFKDSYFEKKDSGGDIVKWTPSVDDIEGEYWRIVEQPTDEVEVYYGADLENGVLGSGFYKRAEKFTGSDMEQYTLSGWNLNNLPRLPGSVLSFEDCDISGVLVPWLYVGMCFSSFCWHVEDHHLYSLNYHHFGEPKVWYGVPGSNATALEKAMRKHLPDLFEEQPDLLHGLVTQFSPSILKDEGVQAYRVVQNSGEYVLTFPRAYHAGFNCGFNCAEAVNVAPVDWLAHGQNAVELYSKETRKTSLSHDKLLLGAAYEAVKALWELSASEGKENTTNLRWKSFCGKNGTLTNAIQARLQMEEGRITALGRDSSSLKKMEKDFDSNCERECFSCFYDLHLSASGCKCSPEEYACLKHADDLCSCDVKDGFILLRYTMDELSSLVRALEGESDDLKIWASKVLGIEHSDEDQTKTSSVISEEKKLKEGSFDLNIDLEMDYQEDVKEEASTSGGELTASENLGVSVEPINLGFLIFGKLWCNKYAIFPKGFRSRVKFYNVLDPTRMSNYISEVLDAGLMGPLFRVTLEESPDESFFNVSAQQCWEMVMRRVKDTSTSLGLPILPQFESINGLQMFGFLSPSIVQAIEALDPNHRLVEYWNHKNQTSSDSKDHFISSNCSASLTKGKLFGVDLM</sequence>
<gene>
    <name evidence="11" type="primary">JMJ18</name>
    <name evidence="14" type="ordered locus">At1g30810</name>
    <name evidence="15" type="ORF">T17H7.10</name>
</gene>
<dbReference type="EC" id="1.14.11.-" evidence="10"/>
<dbReference type="EMBL" id="AC004135">
    <property type="protein sequence ID" value="AAD32935.1"/>
    <property type="status" value="ALT_SEQ"/>
    <property type="molecule type" value="Genomic_DNA"/>
</dbReference>
<dbReference type="EMBL" id="CP002684">
    <property type="protein sequence ID" value="AEE31274.1"/>
    <property type="molecule type" value="Genomic_DNA"/>
</dbReference>
<dbReference type="EMBL" id="CP002684">
    <property type="protein sequence ID" value="AEE31275.1"/>
    <property type="molecule type" value="Genomic_DNA"/>
</dbReference>
<dbReference type="EMBL" id="CP002684">
    <property type="protein sequence ID" value="ANM60555.1"/>
    <property type="molecule type" value="Genomic_DNA"/>
</dbReference>
<dbReference type="EMBL" id="AY062485">
    <property type="protein sequence ID" value="AAL32563.1"/>
    <property type="molecule type" value="mRNA"/>
</dbReference>
<dbReference type="RefSeq" id="NP_001185118.1">
    <property type="nucleotide sequence ID" value="NM_001198189.1"/>
</dbReference>
<dbReference type="RefSeq" id="NP_001319118.1">
    <property type="nucleotide sequence ID" value="NM_001332929.1"/>
</dbReference>
<dbReference type="RefSeq" id="NP_174367.6">
    <property type="nucleotide sequence ID" value="NM_102818.7"/>
</dbReference>
<dbReference type="SMR" id="F4I6G4"/>
<dbReference type="BioGRID" id="25198">
    <property type="interactions" value="4"/>
</dbReference>
<dbReference type="FunCoup" id="F4I6G4">
    <property type="interactions" value="344"/>
</dbReference>
<dbReference type="IntAct" id="F4I6G4">
    <property type="interactions" value="1"/>
</dbReference>
<dbReference type="STRING" id="3702.F4I6G4"/>
<dbReference type="iPTMnet" id="F4I6G4"/>
<dbReference type="PaxDb" id="3702-AT1G30810.1"/>
<dbReference type="ProteomicsDB" id="238989"/>
<dbReference type="EnsemblPlants" id="AT1G30810.1">
    <property type="protein sequence ID" value="AT1G30810.1"/>
    <property type="gene ID" value="AT1G30810"/>
</dbReference>
<dbReference type="EnsemblPlants" id="AT1G30810.2">
    <property type="protein sequence ID" value="AT1G30810.2"/>
    <property type="gene ID" value="AT1G30810"/>
</dbReference>
<dbReference type="EnsemblPlants" id="AT1G30810.3">
    <property type="protein sequence ID" value="AT1G30810.3"/>
    <property type="gene ID" value="AT1G30810"/>
</dbReference>
<dbReference type="GeneID" id="839963"/>
<dbReference type="Gramene" id="AT1G30810.1">
    <property type="protein sequence ID" value="AT1G30810.1"/>
    <property type="gene ID" value="AT1G30810"/>
</dbReference>
<dbReference type="Gramene" id="AT1G30810.2">
    <property type="protein sequence ID" value="AT1G30810.2"/>
    <property type="gene ID" value="AT1G30810"/>
</dbReference>
<dbReference type="Gramene" id="AT1G30810.3">
    <property type="protein sequence ID" value="AT1G30810.3"/>
    <property type="gene ID" value="AT1G30810"/>
</dbReference>
<dbReference type="KEGG" id="ath:AT1G30810"/>
<dbReference type="Araport" id="AT1G30810"/>
<dbReference type="TAIR" id="AT1G30810">
    <property type="gene designation" value="JMJ18"/>
</dbReference>
<dbReference type="eggNOG" id="KOG1246">
    <property type="taxonomic scope" value="Eukaryota"/>
</dbReference>
<dbReference type="HOGENOM" id="CLU_000991_8_1_1"/>
<dbReference type="InParanoid" id="F4I6G4"/>
<dbReference type="OMA" id="VVHGKLW"/>
<dbReference type="OrthoDB" id="1678912at2759"/>
<dbReference type="PRO" id="PR:F4I6G4"/>
<dbReference type="Proteomes" id="UP000006548">
    <property type="component" value="Chromosome 1"/>
</dbReference>
<dbReference type="ExpressionAtlas" id="F4I6G4">
    <property type="expression patterns" value="baseline and differential"/>
</dbReference>
<dbReference type="GO" id="GO:0005634">
    <property type="term" value="C:nucleus"/>
    <property type="evidence" value="ECO:0007669"/>
    <property type="project" value="UniProtKB-SubCell"/>
</dbReference>
<dbReference type="GO" id="GO:0051213">
    <property type="term" value="F:dioxygenase activity"/>
    <property type="evidence" value="ECO:0007669"/>
    <property type="project" value="UniProtKB-KW"/>
</dbReference>
<dbReference type="GO" id="GO:0032453">
    <property type="term" value="F:histone H3K4 demethylase activity"/>
    <property type="evidence" value="ECO:0000314"/>
    <property type="project" value="TAIR"/>
</dbReference>
<dbReference type="GO" id="GO:0000976">
    <property type="term" value="F:transcription cis-regulatory region binding"/>
    <property type="evidence" value="ECO:0000353"/>
    <property type="project" value="TAIR"/>
</dbReference>
<dbReference type="GO" id="GO:0008270">
    <property type="term" value="F:zinc ion binding"/>
    <property type="evidence" value="ECO:0007669"/>
    <property type="project" value="UniProtKB-KW"/>
</dbReference>
<dbReference type="GO" id="GO:0048573">
    <property type="term" value="P:photoperiodism, flowering"/>
    <property type="evidence" value="ECO:0000315"/>
    <property type="project" value="TAIR"/>
</dbReference>
<dbReference type="GO" id="GO:0006355">
    <property type="term" value="P:regulation of DNA-templated transcription"/>
    <property type="evidence" value="ECO:0000304"/>
    <property type="project" value="TAIR"/>
</dbReference>
<dbReference type="Gene3D" id="3.30.160.360">
    <property type="match status" value="1"/>
</dbReference>
<dbReference type="Gene3D" id="2.60.120.650">
    <property type="entry name" value="Cupin"/>
    <property type="match status" value="1"/>
</dbReference>
<dbReference type="InterPro" id="IPR003889">
    <property type="entry name" value="FYrich_C"/>
</dbReference>
<dbReference type="InterPro" id="IPR003888">
    <property type="entry name" value="FYrich_N"/>
</dbReference>
<dbReference type="InterPro" id="IPR003347">
    <property type="entry name" value="JmjC_dom"/>
</dbReference>
<dbReference type="InterPro" id="IPR003349">
    <property type="entry name" value="JmjN"/>
</dbReference>
<dbReference type="InterPro" id="IPR004198">
    <property type="entry name" value="Znf_C5HC2"/>
</dbReference>
<dbReference type="PANTHER" id="PTHR10694">
    <property type="entry name" value="LYSINE-SPECIFIC DEMETHYLASE"/>
    <property type="match status" value="1"/>
</dbReference>
<dbReference type="PANTHER" id="PTHR10694:SF127">
    <property type="entry name" value="LYSINE-SPECIFIC DEMETHYLASE JMJ15-RELATED"/>
    <property type="match status" value="1"/>
</dbReference>
<dbReference type="Pfam" id="PF05965">
    <property type="entry name" value="FYRC"/>
    <property type="match status" value="1"/>
</dbReference>
<dbReference type="Pfam" id="PF05964">
    <property type="entry name" value="FYRN"/>
    <property type="match status" value="1"/>
</dbReference>
<dbReference type="Pfam" id="PF02373">
    <property type="entry name" value="JmjC"/>
    <property type="match status" value="1"/>
</dbReference>
<dbReference type="Pfam" id="PF02375">
    <property type="entry name" value="JmjN"/>
    <property type="match status" value="1"/>
</dbReference>
<dbReference type="Pfam" id="PF02928">
    <property type="entry name" value="zf-C5HC2"/>
    <property type="match status" value="1"/>
</dbReference>
<dbReference type="SMART" id="SM00542">
    <property type="entry name" value="FYRC"/>
    <property type="match status" value="1"/>
</dbReference>
<dbReference type="SMART" id="SM00541">
    <property type="entry name" value="FYRN"/>
    <property type="match status" value="1"/>
</dbReference>
<dbReference type="SMART" id="SM00558">
    <property type="entry name" value="JmjC"/>
    <property type="match status" value="1"/>
</dbReference>
<dbReference type="SMART" id="SM00545">
    <property type="entry name" value="JmjN"/>
    <property type="match status" value="1"/>
</dbReference>
<dbReference type="SUPFAM" id="SSF51197">
    <property type="entry name" value="Clavaminate synthase-like"/>
    <property type="match status" value="1"/>
</dbReference>
<dbReference type="PROSITE" id="PS51543">
    <property type="entry name" value="FYRC"/>
    <property type="match status" value="1"/>
</dbReference>
<dbReference type="PROSITE" id="PS51542">
    <property type="entry name" value="FYRN"/>
    <property type="match status" value="1"/>
</dbReference>
<dbReference type="PROSITE" id="PS51184">
    <property type="entry name" value="JMJC"/>
    <property type="match status" value="1"/>
</dbReference>
<dbReference type="PROSITE" id="PS51183">
    <property type="entry name" value="JMJN"/>
    <property type="match status" value="1"/>
</dbReference>
<feature type="chain" id="PRO_0000429996" description="Lysine-specific demethylase JMJ18">
    <location>
        <begin position="1"/>
        <end position="819"/>
    </location>
</feature>
<feature type="domain" description="JmjN" evidence="3">
    <location>
        <begin position="59"/>
        <end position="100"/>
    </location>
</feature>
<feature type="domain" description="JmjC" evidence="4">
    <location>
        <begin position="261"/>
        <end position="427"/>
    </location>
</feature>
<feature type="domain" description="FYR N-terminal" evidence="6">
    <location>
        <begin position="644"/>
        <end position="702"/>
    </location>
</feature>
<feature type="domain" description="FYR C-terminal" evidence="7">
    <location>
        <begin position="704"/>
        <end position="788"/>
    </location>
</feature>
<feature type="zinc finger region" description="C5HC2" evidence="2">
    <location>
        <begin position="519"/>
        <end position="571"/>
    </location>
</feature>
<feature type="region of interest" description="Disordered" evidence="8">
    <location>
        <begin position="1"/>
        <end position="39"/>
    </location>
</feature>
<feature type="region of interest" description="Disordered" evidence="8">
    <location>
        <begin position="120"/>
        <end position="171"/>
    </location>
</feature>
<feature type="short sequence motif" description="Nuclear localization signal" evidence="5">
    <location>
        <begin position="130"/>
        <end position="137"/>
    </location>
</feature>
<feature type="compositionally biased region" description="Basic and acidic residues" evidence="8">
    <location>
        <begin position="8"/>
        <end position="30"/>
    </location>
</feature>
<feature type="compositionally biased region" description="Basic residues" evidence="8">
    <location>
        <begin position="130"/>
        <end position="154"/>
    </location>
</feature>
<feature type="compositionally biased region" description="Low complexity" evidence="8">
    <location>
        <begin position="155"/>
        <end position="165"/>
    </location>
</feature>
<feature type="binding site" evidence="4">
    <location>
        <position position="307"/>
    </location>
    <ligand>
        <name>Fe cation</name>
        <dbReference type="ChEBI" id="CHEBI:24875"/>
        <note>catalytic</note>
    </ligand>
</feature>
<feature type="binding site" evidence="4">
    <location>
        <position position="309"/>
    </location>
    <ligand>
        <name>Fe cation</name>
        <dbReference type="ChEBI" id="CHEBI:24875"/>
        <note>catalytic</note>
    </ligand>
</feature>
<feature type="binding site" evidence="4">
    <location>
        <position position="395"/>
    </location>
    <ligand>
        <name>Fe cation</name>
        <dbReference type="ChEBI" id="CHEBI:24875"/>
        <note>catalytic</note>
    </ligand>
</feature>
<feature type="binding site" evidence="1">
    <location>
        <position position="519"/>
    </location>
    <ligand>
        <name>Zn(2+)</name>
        <dbReference type="ChEBI" id="CHEBI:29105"/>
        <label>1</label>
    </ligand>
</feature>
<feature type="binding site" evidence="1">
    <location>
        <position position="522"/>
    </location>
    <ligand>
        <name>Zn(2+)</name>
        <dbReference type="ChEBI" id="CHEBI:29105"/>
        <label>1</label>
    </ligand>
</feature>
<feature type="binding site" evidence="1">
    <location>
        <position position="533"/>
    </location>
    <ligand>
        <name>Zn(2+)</name>
        <dbReference type="ChEBI" id="CHEBI:29105"/>
        <label>2</label>
    </ligand>
</feature>
<feature type="binding site" evidence="1">
    <location>
        <position position="535"/>
    </location>
    <ligand>
        <name>Zn(2+)</name>
        <dbReference type="ChEBI" id="CHEBI:29105"/>
        <label>2</label>
    </ligand>
</feature>
<feature type="binding site" evidence="1">
    <location>
        <position position="542"/>
    </location>
    <ligand>
        <name>Zn(2+)</name>
        <dbReference type="ChEBI" id="CHEBI:29105"/>
        <label>1</label>
    </ligand>
</feature>
<feature type="binding site" evidence="1">
    <location>
        <position position="545"/>
    </location>
    <ligand>
        <name>Zn(2+)</name>
        <dbReference type="ChEBI" id="CHEBI:29105"/>
        <label>1</label>
    </ligand>
</feature>
<feature type="binding site" evidence="1">
    <location>
        <position position="550"/>
    </location>
    <ligand>
        <name>Zn(2+)</name>
        <dbReference type="ChEBI" id="CHEBI:29105"/>
        <label>2</label>
    </ligand>
</feature>
<feature type="binding site" evidence="1">
    <location>
        <position position="552"/>
    </location>
    <ligand>
        <name>Zn(2+)</name>
        <dbReference type="ChEBI" id="CHEBI:29105"/>
        <label>2</label>
    </ligand>
</feature>
<feature type="sequence conflict" description="In Ref. 3; AAL32563." evidence="12" ref="3">
    <original>F</original>
    <variation>S</variation>
    <location>
        <position position="683"/>
    </location>
</feature>
<proteinExistence type="evidence at protein level"/>
<evidence type="ECO:0000250" key="1">
    <source>
        <dbReference type="UniProtKB" id="Q8GUI6"/>
    </source>
</evidence>
<evidence type="ECO:0000255" key="2"/>
<evidence type="ECO:0000255" key="3">
    <source>
        <dbReference type="PROSITE-ProRule" id="PRU00537"/>
    </source>
</evidence>
<evidence type="ECO:0000255" key="4">
    <source>
        <dbReference type="PROSITE-ProRule" id="PRU00538"/>
    </source>
</evidence>
<evidence type="ECO:0000255" key="5">
    <source>
        <dbReference type="PROSITE-ProRule" id="PRU00768"/>
    </source>
</evidence>
<evidence type="ECO:0000255" key="6">
    <source>
        <dbReference type="PROSITE-ProRule" id="PRU00875"/>
    </source>
</evidence>
<evidence type="ECO:0000255" key="7">
    <source>
        <dbReference type="PROSITE-ProRule" id="PRU00876"/>
    </source>
</evidence>
<evidence type="ECO:0000256" key="8">
    <source>
        <dbReference type="SAM" id="MobiDB-lite"/>
    </source>
</evidence>
<evidence type="ECO:0000269" key="9">
    <source>
    </source>
</evidence>
<evidence type="ECO:0000269" key="10">
    <source>
    </source>
</evidence>
<evidence type="ECO:0000303" key="11">
    <source>
    </source>
</evidence>
<evidence type="ECO:0000305" key="12"/>
<evidence type="ECO:0000305" key="13">
    <source>
    </source>
</evidence>
<evidence type="ECO:0000312" key="14">
    <source>
        <dbReference type="Araport" id="AT1G30810"/>
    </source>
</evidence>
<evidence type="ECO:0000312" key="15">
    <source>
        <dbReference type="EMBL" id="AAD32935.1"/>
    </source>
</evidence>
<reference key="1">
    <citation type="journal article" date="2000" name="Nature">
        <title>Sequence and analysis of chromosome 1 of the plant Arabidopsis thaliana.</title>
        <authorList>
            <person name="Theologis A."/>
            <person name="Ecker J.R."/>
            <person name="Palm C.J."/>
            <person name="Federspiel N.A."/>
            <person name="Kaul S."/>
            <person name="White O."/>
            <person name="Alonso J."/>
            <person name="Altafi H."/>
            <person name="Araujo R."/>
            <person name="Bowman C.L."/>
            <person name="Brooks S.Y."/>
            <person name="Buehler E."/>
            <person name="Chan A."/>
            <person name="Chao Q."/>
            <person name="Chen H."/>
            <person name="Cheuk R.F."/>
            <person name="Chin C.W."/>
            <person name="Chung M.K."/>
            <person name="Conn L."/>
            <person name="Conway A.B."/>
            <person name="Conway A.R."/>
            <person name="Creasy T.H."/>
            <person name="Dewar K."/>
            <person name="Dunn P."/>
            <person name="Etgu P."/>
            <person name="Feldblyum T.V."/>
            <person name="Feng J.-D."/>
            <person name="Fong B."/>
            <person name="Fujii C.Y."/>
            <person name="Gill J.E."/>
            <person name="Goldsmith A.D."/>
            <person name="Haas B."/>
            <person name="Hansen N.F."/>
            <person name="Hughes B."/>
            <person name="Huizar L."/>
            <person name="Hunter J.L."/>
            <person name="Jenkins J."/>
            <person name="Johnson-Hopson C."/>
            <person name="Khan S."/>
            <person name="Khaykin E."/>
            <person name="Kim C.J."/>
            <person name="Koo H.L."/>
            <person name="Kremenetskaia I."/>
            <person name="Kurtz D.B."/>
            <person name="Kwan A."/>
            <person name="Lam B."/>
            <person name="Langin-Hooper S."/>
            <person name="Lee A."/>
            <person name="Lee J.M."/>
            <person name="Lenz C.A."/>
            <person name="Li J.H."/>
            <person name="Li Y.-P."/>
            <person name="Lin X."/>
            <person name="Liu S.X."/>
            <person name="Liu Z.A."/>
            <person name="Luros J.S."/>
            <person name="Maiti R."/>
            <person name="Marziali A."/>
            <person name="Militscher J."/>
            <person name="Miranda M."/>
            <person name="Nguyen M."/>
            <person name="Nierman W.C."/>
            <person name="Osborne B.I."/>
            <person name="Pai G."/>
            <person name="Peterson J."/>
            <person name="Pham P.K."/>
            <person name="Rizzo M."/>
            <person name="Rooney T."/>
            <person name="Rowley D."/>
            <person name="Sakano H."/>
            <person name="Salzberg S.L."/>
            <person name="Schwartz J.R."/>
            <person name="Shinn P."/>
            <person name="Southwick A.M."/>
            <person name="Sun H."/>
            <person name="Tallon L.J."/>
            <person name="Tambunga G."/>
            <person name="Toriumi M.J."/>
            <person name="Town C.D."/>
            <person name="Utterback T."/>
            <person name="Van Aken S."/>
            <person name="Vaysberg M."/>
            <person name="Vysotskaia V.S."/>
            <person name="Walker M."/>
            <person name="Wu D."/>
            <person name="Yu G."/>
            <person name="Fraser C.M."/>
            <person name="Venter J.C."/>
            <person name="Davis R.W."/>
        </authorList>
    </citation>
    <scope>NUCLEOTIDE SEQUENCE [LARGE SCALE GENOMIC DNA]</scope>
    <source>
        <strain>cv. Columbia</strain>
    </source>
</reference>
<reference key="2">
    <citation type="journal article" date="2017" name="Plant J.">
        <title>Araport11: a complete reannotation of the Arabidopsis thaliana reference genome.</title>
        <authorList>
            <person name="Cheng C.Y."/>
            <person name="Krishnakumar V."/>
            <person name="Chan A.P."/>
            <person name="Thibaud-Nissen F."/>
            <person name="Schobel S."/>
            <person name="Town C.D."/>
        </authorList>
    </citation>
    <scope>GENOME REANNOTATION</scope>
    <source>
        <strain>cv. Columbia</strain>
    </source>
</reference>
<reference key="3">
    <citation type="journal article" date="2003" name="Science">
        <title>Empirical analysis of transcriptional activity in the Arabidopsis genome.</title>
        <authorList>
            <person name="Yamada K."/>
            <person name="Lim J."/>
            <person name="Dale J.M."/>
            <person name="Chen H."/>
            <person name="Shinn P."/>
            <person name="Palm C.J."/>
            <person name="Southwick A.M."/>
            <person name="Wu H.C."/>
            <person name="Kim C.J."/>
            <person name="Nguyen M."/>
            <person name="Pham P.K."/>
            <person name="Cheuk R.F."/>
            <person name="Karlin-Newmann G."/>
            <person name="Liu S.X."/>
            <person name="Lam B."/>
            <person name="Sakano H."/>
            <person name="Wu T."/>
            <person name="Yu G."/>
            <person name="Miranda M."/>
            <person name="Quach H.L."/>
            <person name="Tripp M."/>
            <person name="Chang C.H."/>
            <person name="Lee J.M."/>
            <person name="Toriumi M.J."/>
            <person name="Chan M.M."/>
            <person name="Tang C.C."/>
            <person name="Onodera C.S."/>
            <person name="Deng J.M."/>
            <person name="Akiyama K."/>
            <person name="Ansari Y."/>
            <person name="Arakawa T."/>
            <person name="Banh J."/>
            <person name="Banno F."/>
            <person name="Bowser L."/>
            <person name="Brooks S.Y."/>
            <person name="Carninci P."/>
            <person name="Chao Q."/>
            <person name="Choy N."/>
            <person name="Enju A."/>
            <person name="Goldsmith A.D."/>
            <person name="Gurjal M."/>
            <person name="Hansen N.F."/>
            <person name="Hayashizaki Y."/>
            <person name="Johnson-Hopson C."/>
            <person name="Hsuan V.W."/>
            <person name="Iida K."/>
            <person name="Karnes M."/>
            <person name="Khan S."/>
            <person name="Koesema E."/>
            <person name="Ishida J."/>
            <person name="Jiang P.X."/>
            <person name="Jones T."/>
            <person name="Kawai J."/>
            <person name="Kamiya A."/>
            <person name="Meyers C."/>
            <person name="Nakajima M."/>
            <person name="Narusaka M."/>
            <person name="Seki M."/>
            <person name="Sakurai T."/>
            <person name="Satou M."/>
            <person name="Tamse R."/>
            <person name="Vaysberg M."/>
            <person name="Wallender E.K."/>
            <person name="Wong C."/>
            <person name="Yamamura Y."/>
            <person name="Yuan S."/>
            <person name="Shinozaki K."/>
            <person name="Davis R.W."/>
            <person name="Theologis A."/>
            <person name="Ecker J.R."/>
        </authorList>
    </citation>
    <scope>NUCLEOTIDE SEQUENCE [LARGE SCALE MRNA]</scope>
    <source>
        <strain>cv. Columbia</strain>
    </source>
</reference>
<reference key="4">
    <citation type="journal article" date="2008" name="J. Integr. Plant Biol.">
        <title>Comparative analysis of JmjC domain-containing proteins reveals the potential histone demethylases in Arabidopsis and rice.</title>
        <authorList>
            <person name="Lu F."/>
            <person name="Li G."/>
            <person name="Cui X."/>
            <person name="Liu C."/>
            <person name="Wang X.-J."/>
            <person name="Cao X."/>
        </authorList>
    </citation>
    <scope>GENE FAMILY</scope>
    <scope>NOMENCLATURE</scope>
    <scope>TISSUE SPECIFICITY</scope>
</reference>
<reference key="5">
    <citation type="journal article" date="2012" name="PLoS Genet.">
        <title>A companion cell-dominant and developmentally regulated H3K4 demethylase controls flowering time in Arabidopsis via the repression of FLC expression.</title>
        <authorList>
            <person name="Yang H."/>
            <person name="Han Z."/>
            <person name="Cao Y."/>
            <person name="Fan D."/>
            <person name="Li H."/>
            <person name="Mo H."/>
            <person name="Feng Y."/>
            <person name="Liu L."/>
            <person name="Wang Z."/>
            <person name="Yue Y."/>
            <person name="Cui S."/>
            <person name="Chen S."/>
            <person name="Chai J."/>
            <person name="Ma L."/>
        </authorList>
    </citation>
    <scope>FUNCTION</scope>
    <scope>CATALYTIC ACTIVITY</scope>
    <scope>SUBCELLULAR LOCATION</scope>
    <scope>TISSUE SPECIFICITY</scope>
    <scope>DISRUPTION PHENOTYPE</scope>
</reference>